<dbReference type="EC" id="1.14.14.1"/>
<dbReference type="EMBL" id="D17397">
    <property type="protein sequence ID" value="BAA04220.1"/>
    <property type="molecule type" value="mRNA"/>
</dbReference>
<dbReference type="EMBL" id="AB004268">
    <property type="protein sequence ID" value="BAA20357.1"/>
    <property type="molecule type" value="mRNA"/>
</dbReference>
<dbReference type="PIR" id="JC4157">
    <property type="entry name" value="JC4157"/>
</dbReference>
<dbReference type="RefSeq" id="NP_001003333.1">
    <property type="nucleotide sequence ID" value="NM_001003333.1"/>
</dbReference>
<dbReference type="SMR" id="Q29473"/>
<dbReference type="FunCoup" id="Q29473">
    <property type="interactions" value="77"/>
</dbReference>
<dbReference type="STRING" id="9615.ENSCAFP00000065572"/>
<dbReference type="ChEMBL" id="CHEMBL1795137"/>
<dbReference type="GeneID" id="415120"/>
<dbReference type="KEGG" id="cfa:415120"/>
<dbReference type="CTD" id="415120"/>
<dbReference type="InParanoid" id="Q29473"/>
<dbReference type="OrthoDB" id="23506at33554"/>
<dbReference type="PRO" id="PR:Q29473"/>
<dbReference type="Proteomes" id="UP000002254">
    <property type="component" value="Unplaced"/>
</dbReference>
<dbReference type="Proteomes" id="UP000694429">
    <property type="component" value="Unplaced"/>
</dbReference>
<dbReference type="Proteomes" id="UP000694542">
    <property type="component" value="Unplaced"/>
</dbReference>
<dbReference type="Proteomes" id="UP000805418">
    <property type="component" value="Unplaced"/>
</dbReference>
<dbReference type="GO" id="GO:0005737">
    <property type="term" value="C:cytoplasm"/>
    <property type="evidence" value="ECO:0000318"/>
    <property type="project" value="GO_Central"/>
</dbReference>
<dbReference type="GO" id="GO:0005789">
    <property type="term" value="C:endoplasmic reticulum membrane"/>
    <property type="evidence" value="ECO:0007669"/>
    <property type="project" value="UniProtKB-SubCell"/>
</dbReference>
<dbReference type="GO" id="GO:0043231">
    <property type="term" value="C:intracellular membrane-bounded organelle"/>
    <property type="evidence" value="ECO:0000318"/>
    <property type="project" value="GO_Central"/>
</dbReference>
<dbReference type="GO" id="GO:0020037">
    <property type="term" value="F:heme binding"/>
    <property type="evidence" value="ECO:0000318"/>
    <property type="project" value="GO_Central"/>
</dbReference>
<dbReference type="GO" id="GO:0005506">
    <property type="term" value="F:iron ion binding"/>
    <property type="evidence" value="ECO:0007669"/>
    <property type="project" value="InterPro"/>
</dbReference>
<dbReference type="GO" id="GO:0016712">
    <property type="term" value="F:oxidoreductase activity, acting on paired donors, with incorporation or reduction of molecular oxygen, reduced flavin or flavoprotein as one donor, and incorporation of one atom of oxygen"/>
    <property type="evidence" value="ECO:0000318"/>
    <property type="project" value="GO_Central"/>
</dbReference>
<dbReference type="GO" id="GO:0019369">
    <property type="term" value="P:arachidonate metabolic process"/>
    <property type="evidence" value="ECO:0000318"/>
    <property type="project" value="GO_Central"/>
</dbReference>
<dbReference type="GO" id="GO:0006805">
    <property type="term" value="P:xenobiotic metabolic process"/>
    <property type="evidence" value="ECO:0000318"/>
    <property type="project" value="GO_Central"/>
</dbReference>
<dbReference type="CDD" id="cd20663">
    <property type="entry name" value="CYP2D"/>
    <property type="match status" value="1"/>
</dbReference>
<dbReference type="FunFam" id="1.10.630.10:FF:000004">
    <property type="entry name" value="cytochrome P450 2D15 isoform X1"/>
    <property type="match status" value="1"/>
</dbReference>
<dbReference type="Gene3D" id="1.10.630.10">
    <property type="entry name" value="Cytochrome P450"/>
    <property type="match status" value="1"/>
</dbReference>
<dbReference type="InterPro" id="IPR001128">
    <property type="entry name" value="Cyt_P450"/>
</dbReference>
<dbReference type="InterPro" id="IPR017972">
    <property type="entry name" value="Cyt_P450_CS"/>
</dbReference>
<dbReference type="InterPro" id="IPR002401">
    <property type="entry name" value="Cyt_P450_E_grp-I"/>
</dbReference>
<dbReference type="InterPro" id="IPR008069">
    <property type="entry name" value="Cyt_P450_E_grp-I_CYP2D-like"/>
</dbReference>
<dbReference type="InterPro" id="IPR036396">
    <property type="entry name" value="Cyt_P450_sf"/>
</dbReference>
<dbReference type="InterPro" id="IPR050182">
    <property type="entry name" value="Cytochrome_P450_fam2"/>
</dbReference>
<dbReference type="PANTHER" id="PTHR24300:SF1">
    <property type="entry name" value="CYTOCHROME P450 2D6-RELATED"/>
    <property type="match status" value="1"/>
</dbReference>
<dbReference type="PANTHER" id="PTHR24300">
    <property type="entry name" value="CYTOCHROME P450 508A4-RELATED"/>
    <property type="match status" value="1"/>
</dbReference>
<dbReference type="Pfam" id="PF00067">
    <property type="entry name" value="p450"/>
    <property type="match status" value="1"/>
</dbReference>
<dbReference type="PRINTS" id="PR00463">
    <property type="entry name" value="EP450I"/>
</dbReference>
<dbReference type="PRINTS" id="PR01686">
    <property type="entry name" value="EP450ICYP2D"/>
</dbReference>
<dbReference type="PRINTS" id="PR00385">
    <property type="entry name" value="P450"/>
</dbReference>
<dbReference type="SUPFAM" id="SSF48264">
    <property type="entry name" value="Cytochrome P450"/>
    <property type="match status" value="1"/>
</dbReference>
<dbReference type="PROSITE" id="PS00086">
    <property type="entry name" value="CYTOCHROME_P450"/>
    <property type="match status" value="1"/>
</dbReference>
<keyword id="KW-0903">Direct protein sequencing</keyword>
<keyword id="KW-0256">Endoplasmic reticulum</keyword>
<keyword id="KW-0349">Heme</keyword>
<keyword id="KW-0408">Iron</keyword>
<keyword id="KW-0472">Membrane</keyword>
<keyword id="KW-0479">Metal-binding</keyword>
<keyword id="KW-0492">Microsome</keyword>
<keyword id="KW-0503">Monooxygenase</keyword>
<keyword id="KW-0560">Oxidoreductase</keyword>
<keyword id="KW-1185">Reference proteome</keyword>
<comment type="function">
    <text>High activity for the hydroxylation of bunitrolol and imipramine; low activity on debrisoquine.</text>
</comment>
<comment type="catalytic activity">
    <reaction>
        <text>an organic molecule + reduced [NADPH--hemoprotein reductase] + O2 = an alcohol + oxidized [NADPH--hemoprotein reductase] + H2O + H(+)</text>
        <dbReference type="Rhea" id="RHEA:17149"/>
        <dbReference type="Rhea" id="RHEA-COMP:11964"/>
        <dbReference type="Rhea" id="RHEA-COMP:11965"/>
        <dbReference type="ChEBI" id="CHEBI:15377"/>
        <dbReference type="ChEBI" id="CHEBI:15378"/>
        <dbReference type="ChEBI" id="CHEBI:15379"/>
        <dbReference type="ChEBI" id="CHEBI:30879"/>
        <dbReference type="ChEBI" id="CHEBI:57618"/>
        <dbReference type="ChEBI" id="CHEBI:58210"/>
        <dbReference type="ChEBI" id="CHEBI:142491"/>
        <dbReference type="EC" id="1.14.14.1"/>
    </reaction>
</comment>
<comment type="cofactor">
    <cofactor evidence="1">
        <name>heme</name>
        <dbReference type="ChEBI" id="CHEBI:30413"/>
    </cofactor>
</comment>
<comment type="subcellular location">
    <subcellularLocation>
        <location>Endoplasmic reticulum membrane</location>
        <topology>Peripheral membrane protein</topology>
    </subcellularLocation>
    <subcellularLocation>
        <location>Microsome membrane</location>
        <topology>Peripheral membrane protein</topology>
    </subcellularLocation>
</comment>
<comment type="tissue specificity">
    <text>Liver. Also detected in several other tissues.</text>
</comment>
<comment type="similarity">
    <text evidence="2">Belongs to the cytochrome P450 family.</text>
</comment>
<sequence>MGLLTGDTLGPLAVAVAIFLLLVDLMHRRRRWATRYPPGPTPVPMVGNLLQMDFQEPICYFSQLQGRFGNVFSLELAWTPVVVLNGLEAVREALVHRSEDTADRPPMPIYDHLGLGPESQGLFLARYGRAWREQRRFSLSTLRNFGLGRKSLEQWVTEEASCLCAAFAEQAGRPFGPGALLNKAVSNVISSLTYGRRFEYDDPRLLQLLELTQQALKQDSGFLREALNSIPVLLHIPGLASKVFSAQKAIITLTNEMIQEHRKTRDPTQPPRHLIDAFVDEIEKAKGNPKTSFNEENLCMVTSDLFIAGMVSTSITLTWALLLMILHPDVQRRVQQEIDEVIGREQLPEMGDQTRMPFTVAVIHEVQRFGDIVPLGVPHMTSRDTEVQGFLIPKGTTLITNLSSVLKDEKVWKKPFRFYPEHFLDAQGHFVKHEAFMPFSAGRRVCLGEPLARMELFLFFTCLLQRFSFSVPAGQPRPSDHGVFTFLKVPAPFQLCVEPR</sequence>
<organism>
    <name type="scientific">Canis lupus familiaris</name>
    <name type="common">Dog</name>
    <name type="synonym">Canis familiaris</name>
    <dbReference type="NCBI Taxonomy" id="9615"/>
    <lineage>
        <taxon>Eukaryota</taxon>
        <taxon>Metazoa</taxon>
        <taxon>Chordata</taxon>
        <taxon>Craniata</taxon>
        <taxon>Vertebrata</taxon>
        <taxon>Euteleostomi</taxon>
        <taxon>Mammalia</taxon>
        <taxon>Eutheria</taxon>
        <taxon>Laurasiatheria</taxon>
        <taxon>Carnivora</taxon>
        <taxon>Caniformia</taxon>
        <taxon>Canidae</taxon>
        <taxon>Canis</taxon>
    </lineage>
</organism>
<protein>
    <recommendedName>
        <fullName>Cytochrome P450 2D15</fullName>
        <ecNumber>1.14.14.1</ecNumber>
    </recommendedName>
    <alternativeName>
        <fullName>CYPIID15</fullName>
    </alternativeName>
    <alternativeName>
        <fullName>Cytochrome P450 DUT2</fullName>
    </alternativeName>
</protein>
<reference key="1">
    <citation type="journal article" date="1995" name="Arch. Biochem. Biophys.">
        <title>A new cytochrome P450 form belonging to the CYP2D in dog liver microsomes: purification, cDNA cloning, and enzyme characterization.</title>
        <authorList>
            <person name="Sakamoto K."/>
            <person name="Kirita S."/>
            <person name="Baba T."/>
            <person name="Nakamura Y."/>
            <person name="Yamazoe Y."/>
            <person name="Kato R."/>
            <person name="Takanaka A."/>
            <person name="Matsubara T."/>
        </authorList>
    </citation>
    <scope>NUCLEOTIDE SEQUENCE [MRNA]</scope>
    <scope>PARTIAL PROTEIN SEQUENCE</scope>
    <source>
        <tissue>Liver</tissue>
    </source>
</reference>
<reference key="2">
    <citation type="journal article" date="1998" name="J. Biochem.">
        <title>Expression and characterization of dog CYP2D15 using baculovirus expression system.</title>
        <authorList>
            <person name="Tasaki T."/>
            <person name="Nakamura A."/>
            <person name="Itoh S."/>
            <person name="Ohashi K."/>
            <person name="Yamamoto Y."/>
            <person name="Masuda M."/>
            <person name="Iwata H."/>
            <person name="Kazusaka A."/>
            <person name="Kamataki T."/>
            <person name="Fujita S."/>
        </authorList>
    </citation>
    <scope>NUCLEOTIDE SEQUENCE [MRNA]</scope>
    <source>
        <strain>Beagle</strain>
    </source>
</reference>
<reference key="3">
    <citation type="journal article" date="1998" name="Arch. Biochem. Biophys.">
        <title>Expression and characterization of canine cytochrome P450 2D15.</title>
        <authorList>
            <person name="Roussel F."/>
            <person name="Duignan D.B."/>
            <person name="Lawton M.P."/>
            <person name="Obach R.S."/>
            <person name="Strick C.A."/>
            <person name="Tweedie D.J."/>
        </authorList>
    </citation>
    <scope>CHARACTERIZATION</scope>
</reference>
<name>CP2DF_CANLF</name>
<proteinExistence type="evidence at protein level"/>
<feature type="chain" id="PRO_0000051739" description="Cytochrome P450 2D15">
    <location>
        <begin position="1"/>
        <end position="500"/>
    </location>
</feature>
<feature type="binding site" description="axial binding residue" evidence="1">
    <location>
        <position position="446"/>
    </location>
    <ligand>
        <name>heme</name>
        <dbReference type="ChEBI" id="CHEBI:30413"/>
    </ligand>
    <ligandPart>
        <name>Fe</name>
        <dbReference type="ChEBI" id="CHEBI:18248"/>
    </ligandPart>
</feature>
<evidence type="ECO:0000250" key="1"/>
<evidence type="ECO:0000305" key="2"/>
<gene>
    <name type="primary">CYP2D15</name>
</gene>
<accession>Q29473</accession>
<accession>O02859</accession>